<proteinExistence type="inferred from homology"/>
<organism>
    <name type="scientific">Escherichia coli (strain ATCC 8739 / DSM 1576 / NBRC 3972 / NCIMB 8545 / WDCM 00012 / Crooks)</name>
    <dbReference type="NCBI Taxonomy" id="481805"/>
    <lineage>
        <taxon>Bacteria</taxon>
        <taxon>Pseudomonadati</taxon>
        <taxon>Pseudomonadota</taxon>
        <taxon>Gammaproteobacteria</taxon>
        <taxon>Enterobacterales</taxon>
        <taxon>Enterobacteriaceae</taxon>
        <taxon>Escherichia</taxon>
    </lineage>
</organism>
<evidence type="ECO:0000255" key="1">
    <source>
        <dbReference type="HAMAP-Rule" id="MF_02052"/>
    </source>
</evidence>
<gene>
    <name evidence="1" type="primary">lsrF</name>
    <name type="ordered locus">EcolC_2141</name>
</gene>
<feature type="chain" id="PRO_0000351518" description="3-hydroxy-5-phosphonooxypentane-2,4-dione thiolase">
    <location>
        <begin position="1"/>
        <end position="291"/>
    </location>
</feature>
<feature type="active site" description="Schiff-base intermediate with substrate" evidence="1">
    <location>
        <position position="203"/>
    </location>
</feature>
<accession>B1IRU3</accession>
<reference key="1">
    <citation type="submission" date="2008-02" db="EMBL/GenBank/DDBJ databases">
        <title>Complete sequence of Escherichia coli C str. ATCC 8739.</title>
        <authorList>
            <person name="Copeland A."/>
            <person name="Lucas S."/>
            <person name="Lapidus A."/>
            <person name="Glavina del Rio T."/>
            <person name="Dalin E."/>
            <person name="Tice H."/>
            <person name="Bruce D."/>
            <person name="Goodwin L."/>
            <person name="Pitluck S."/>
            <person name="Kiss H."/>
            <person name="Brettin T."/>
            <person name="Detter J.C."/>
            <person name="Han C."/>
            <person name="Kuske C.R."/>
            <person name="Schmutz J."/>
            <person name="Larimer F."/>
            <person name="Land M."/>
            <person name="Hauser L."/>
            <person name="Kyrpides N."/>
            <person name="Mikhailova N."/>
            <person name="Ingram L."/>
            <person name="Richardson P."/>
        </authorList>
    </citation>
    <scope>NUCLEOTIDE SEQUENCE [LARGE SCALE GENOMIC DNA]</scope>
    <source>
        <strain>ATCC 8739 / DSM 1576 / NBRC 3972 / NCIMB 8545 / WDCM 00012 / Crooks</strain>
    </source>
</reference>
<keyword id="KW-0963">Cytoplasm</keyword>
<keyword id="KW-0704">Schiff base</keyword>
<keyword id="KW-0808">Transferase</keyword>
<dbReference type="EC" id="2.3.1.245" evidence="1"/>
<dbReference type="EMBL" id="CP000946">
    <property type="protein sequence ID" value="ACA77781.1"/>
    <property type="molecule type" value="Genomic_DNA"/>
</dbReference>
<dbReference type="RefSeq" id="WP_000774189.1">
    <property type="nucleotide sequence ID" value="NZ_MTFT01000006.1"/>
</dbReference>
<dbReference type="SMR" id="B1IRU3"/>
<dbReference type="KEGG" id="ecl:EcolC_2141"/>
<dbReference type="HOGENOM" id="CLU_057069_1_0_6"/>
<dbReference type="GO" id="GO:0005737">
    <property type="term" value="C:cytoplasm"/>
    <property type="evidence" value="ECO:0007669"/>
    <property type="project" value="UniProtKB-SubCell"/>
</dbReference>
<dbReference type="GO" id="GO:0016747">
    <property type="term" value="F:acyltransferase activity, transferring groups other than amino-acyl groups"/>
    <property type="evidence" value="ECO:0007669"/>
    <property type="project" value="UniProtKB-UniRule"/>
</dbReference>
<dbReference type="GO" id="GO:0004332">
    <property type="term" value="F:fructose-bisphosphate aldolase activity"/>
    <property type="evidence" value="ECO:0007669"/>
    <property type="project" value="InterPro"/>
</dbReference>
<dbReference type="CDD" id="cd00958">
    <property type="entry name" value="DhnA"/>
    <property type="match status" value="1"/>
</dbReference>
<dbReference type="FunFam" id="3.20.20.70:FF:000168">
    <property type="entry name" value="3-hydroxy-5-phosphonooxypentane-2,4-dione thiolase"/>
    <property type="match status" value="1"/>
</dbReference>
<dbReference type="Gene3D" id="3.20.20.70">
    <property type="entry name" value="Aldolase class I"/>
    <property type="match status" value="1"/>
</dbReference>
<dbReference type="HAMAP" id="MF_02052">
    <property type="entry name" value="LsrF"/>
    <property type="match status" value="1"/>
</dbReference>
<dbReference type="InterPro" id="IPR013785">
    <property type="entry name" value="Aldolase_TIM"/>
</dbReference>
<dbReference type="InterPro" id="IPR002915">
    <property type="entry name" value="DeoC/FbaB/LacD_aldolase"/>
</dbReference>
<dbReference type="InterPro" id="IPR050456">
    <property type="entry name" value="DeoC/FbaB_aldolase"/>
</dbReference>
<dbReference type="InterPro" id="IPR041720">
    <property type="entry name" value="FbaB-like"/>
</dbReference>
<dbReference type="InterPro" id="IPR033673">
    <property type="entry name" value="LsrF"/>
</dbReference>
<dbReference type="NCBIfam" id="NF006081">
    <property type="entry name" value="PRK08227.1"/>
    <property type="match status" value="1"/>
</dbReference>
<dbReference type="PANTHER" id="PTHR47916:SF1">
    <property type="entry name" value="3-HYDROXY-5-PHOSPHONOOXYPENTANE-2,4-DIONE THIOLASE"/>
    <property type="match status" value="1"/>
</dbReference>
<dbReference type="PANTHER" id="PTHR47916">
    <property type="entry name" value="FRUCTOSE-BISPHOSPHATE ALDOLASE CLASS 1"/>
    <property type="match status" value="1"/>
</dbReference>
<dbReference type="Pfam" id="PF01791">
    <property type="entry name" value="DeoC"/>
    <property type="match status" value="1"/>
</dbReference>
<dbReference type="PIRSF" id="PIRSF038992">
    <property type="entry name" value="Aldolase_Ia"/>
    <property type="match status" value="1"/>
</dbReference>
<dbReference type="SMART" id="SM01133">
    <property type="entry name" value="DeoC"/>
    <property type="match status" value="1"/>
</dbReference>
<dbReference type="SUPFAM" id="SSF51569">
    <property type="entry name" value="Aldolase"/>
    <property type="match status" value="1"/>
</dbReference>
<protein>
    <recommendedName>
        <fullName evidence="1">3-hydroxy-5-phosphonooxypentane-2,4-dione thiolase</fullName>
        <ecNumber evidence="1">2.3.1.245</ecNumber>
    </recommendedName>
</protein>
<name>LSRF_ECOLC</name>
<comment type="function">
    <text evidence="1">Involved in the degradation of phospho-AI-2, thereby terminating induction of the lsr operon and closing the AI-2 signaling cycle. Catalyzes the transfer of an acetyl moiety from 3-hydroxy-5-phosphonooxypentane-2,4-dione to CoA to form glycerone phosphate and acetyl-CoA.</text>
</comment>
<comment type="catalytic activity">
    <reaction evidence="1">
        <text>dihydroxyacetone phosphate + acetyl-CoA = 3-hydroxy-2,4-dioxopentyl phosphate + CoA</text>
        <dbReference type="Rhea" id="RHEA:44736"/>
        <dbReference type="ChEBI" id="CHEBI:57287"/>
        <dbReference type="ChEBI" id="CHEBI:57288"/>
        <dbReference type="ChEBI" id="CHEBI:57642"/>
        <dbReference type="ChEBI" id="CHEBI:84359"/>
        <dbReference type="EC" id="2.3.1.245"/>
    </reaction>
</comment>
<comment type="subunit">
    <text evidence="1">Homodecamer.</text>
</comment>
<comment type="subcellular location">
    <subcellularLocation>
        <location evidence="1">Cytoplasm</location>
    </subcellularLocation>
</comment>
<comment type="similarity">
    <text evidence="1">Belongs to the DeoC/FbaB aldolase family.</text>
</comment>
<sequence length="291" mass="31851">MADLDDIKDGKDFRTDQPQQNIPFTLKGCGALDWGMQSRLSRIFNPKTGNTVMLAFDHGYFQGPTTGLERIDINIAPLFEHADVLMCTRGILRSVVPPATNKPVVLRASGANSILAELSNEAVALSMDDAVRLNSCAVAAQVYIGSEYEHQSIKNIIQLVDAGMKVGMPTMAVTGVGKDMVRDQRYFSLATRIAAEMGAQIIKTYYVEKGFERIVAGCPVPIVIAGGKKLPEREALEMCWQAIDQGASGVDMGRNIFQSDHPVAMMKAVQAVVHHNETADRAYELYLSEKQ</sequence>